<evidence type="ECO:0000255" key="1"/>
<evidence type="ECO:0000255" key="2">
    <source>
        <dbReference type="PROSITE-ProRule" id="PRU00116"/>
    </source>
</evidence>
<evidence type="ECO:0000255" key="3">
    <source>
        <dbReference type="PROSITE-ProRule" id="PRU00503"/>
    </source>
</evidence>
<evidence type="ECO:0000255" key="4">
    <source>
        <dbReference type="PROSITE-ProRule" id="PRU00782"/>
    </source>
</evidence>
<evidence type="ECO:0000255" key="5">
    <source>
        <dbReference type="PROSITE-ProRule" id="PRU01190"/>
    </source>
</evidence>
<evidence type="ECO:0000269" key="6">
    <source>
    </source>
</evidence>
<evidence type="ECO:0000269" key="7">
    <source ref="4"/>
</evidence>
<evidence type="ECO:0000303" key="8">
    <source>
    </source>
</evidence>
<evidence type="ECO:0000305" key="9"/>
<evidence type="ECO:0007829" key="10">
    <source>
        <dbReference type="PDB" id="4L8T"/>
    </source>
</evidence>
<evidence type="ECO:0007829" key="11">
    <source>
        <dbReference type="PDB" id="4ZG4"/>
    </source>
</evidence>
<evidence type="ECO:0007829" key="12">
    <source>
        <dbReference type="PDB" id="5HMP"/>
    </source>
</evidence>
<feature type="initiator methionine" description="Removed" evidence="7">
    <location>
        <position position="1"/>
    </location>
</feature>
<feature type="chain" id="PRO_0000123463" description="Unconventional myosin-Vc">
    <location>
        <begin position="2"/>
        <end position="1742"/>
    </location>
</feature>
<feature type="domain" description="Myosin N-terminal SH3-like" evidence="5">
    <location>
        <begin position="8"/>
        <end position="62"/>
    </location>
</feature>
<feature type="domain" description="Myosin motor" evidence="4">
    <location>
        <begin position="67"/>
        <end position="753"/>
    </location>
</feature>
<feature type="domain" description="IQ 1" evidence="2">
    <location>
        <begin position="756"/>
        <end position="779"/>
    </location>
</feature>
<feature type="domain" description="IQ 2" evidence="2">
    <location>
        <begin position="780"/>
        <end position="806"/>
    </location>
</feature>
<feature type="domain" description="IQ 3" evidence="2">
    <location>
        <begin position="807"/>
        <end position="829"/>
    </location>
</feature>
<feature type="domain" description="IQ 4" evidence="2">
    <location>
        <begin position="830"/>
        <end position="854"/>
    </location>
</feature>
<feature type="domain" description="IQ 5" evidence="2">
    <location>
        <begin position="855"/>
        <end position="884"/>
    </location>
</feature>
<feature type="domain" description="Dilute" evidence="3">
    <location>
        <begin position="1421"/>
        <end position="1697"/>
    </location>
</feature>
<feature type="region of interest" description="Actin-binding" evidence="4">
    <location>
        <begin position="632"/>
        <end position="654"/>
    </location>
</feature>
<feature type="coiled-coil region" evidence="1">
    <location>
        <begin position="884"/>
        <end position="1351"/>
    </location>
</feature>
<feature type="binding site" evidence="4">
    <location>
        <begin position="161"/>
        <end position="168"/>
    </location>
    <ligand>
        <name>ATP</name>
        <dbReference type="ChEBI" id="CHEBI:30616"/>
    </ligand>
</feature>
<feature type="modified residue" description="N-acetylalanine" evidence="7">
    <location>
        <position position="2"/>
    </location>
</feature>
<feature type="splice variant" id="VSP_056592" description="In isoform 2." evidence="8">
    <original>GKQHTF</original>
    <variation>VLKPLM</variation>
    <location>
        <begin position="425"/>
        <end position="430"/>
    </location>
</feature>
<feature type="splice variant" id="VSP_056593" description="In isoform 2." evidence="8">
    <location>
        <begin position="431"/>
        <end position="1742"/>
    </location>
</feature>
<feature type="sequence variant" id="VAR_061365" description="In dbSNP:rs55686434.">
    <original>R</original>
    <variation>C</variation>
    <location>
        <position position="172"/>
    </location>
</feature>
<feature type="sequence variant" id="VAR_010646" evidence="6">
    <original>L</original>
    <variation>P</variation>
    <location>
        <position position="522"/>
    </location>
</feature>
<feature type="sequence variant" id="VAR_010647">
    <original>L</original>
    <variation>S</variation>
    <location>
        <position position="634"/>
    </location>
</feature>
<feature type="sequence variant" id="VAR_024544" description="In dbSNP:rs3825801.">
    <original>E</original>
    <variation>K</variation>
    <location>
        <position position="1075"/>
    </location>
</feature>
<feature type="sequence variant" id="VAR_056186" description="In dbSNP:rs17650440.">
    <original>P</original>
    <variation>L</variation>
    <location>
        <position position="1396"/>
    </location>
</feature>
<feature type="helix" evidence="11">
    <location>
        <begin position="3"/>
        <end position="6"/>
    </location>
</feature>
<feature type="strand" evidence="11">
    <location>
        <begin position="12"/>
        <end position="17"/>
    </location>
</feature>
<feature type="turn" evidence="11">
    <location>
        <begin position="18"/>
        <end position="20"/>
    </location>
</feature>
<feature type="strand" evidence="11">
    <location>
        <begin position="21"/>
        <end position="29"/>
    </location>
</feature>
<feature type="strand" evidence="11">
    <location>
        <begin position="37"/>
        <end position="42"/>
    </location>
</feature>
<feature type="strand" evidence="11">
    <location>
        <begin position="47"/>
        <end position="51"/>
    </location>
</feature>
<feature type="strand" evidence="11">
    <location>
        <begin position="54"/>
        <end position="56"/>
    </location>
</feature>
<feature type="turn" evidence="12">
    <location>
        <begin position="64"/>
        <end position="68"/>
    </location>
</feature>
<feature type="helix" evidence="11">
    <location>
        <begin position="72"/>
        <end position="74"/>
    </location>
</feature>
<feature type="helix" evidence="11">
    <location>
        <begin position="80"/>
        <end position="92"/>
    </location>
</feature>
<feature type="strand" evidence="11">
    <location>
        <begin position="98"/>
        <end position="101"/>
    </location>
</feature>
<feature type="strand" evidence="11">
    <location>
        <begin position="104"/>
        <end position="108"/>
    </location>
</feature>
<feature type="helix" evidence="11">
    <location>
        <begin position="119"/>
        <end position="125"/>
    </location>
</feature>
<feature type="turn" evidence="11">
    <location>
        <begin position="130"/>
        <end position="132"/>
    </location>
</feature>
<feature type="helix" evidence="11">
    <location>
        <begin position="137"/>
        <end position="151"/>
    </location>
</feature>
<feature type="strand" evidence="11">
    <location>
        <begin position="155"/>
        <end position="160"/>
    </location>
</feature>
<feature type="helix" evidence="11">
    <location>
        <begin position="167"/>
        <end position="182"/>
    </location>
</feature>
<feature type="helix" evidence="11">
    <location>
        <begin position="190"/>
        <end position="205"/>
    </location>
</feature>
<feature type="strand" evidence="11">
    <location>
        <begin position="218"/>
        <end position="226"/>
    </location>
</feature>
<feature type="strand" evidence="11">
    <location>
        <begin position="232"/>
        <end position="240"/>
    </location>
</feature>
<feature type="helix" evidence="11">
    <location>
        <begin position="245"/>
        <end position="247"/>
    </location>
</feature>
<feature type="helix" evidence="11">
    <location>
        <begin position="258"/>
        <end position="264"/>
    </location>
</feature>
<feature type="turn" evidence="11">
    <location>
        <begin position="265"/>
        <end position="268"/>
    </location>
</feature>
<feature type="helix" evidence="11">
    <location>
        <begin position="270"/>
        <end position="275"/>
    </location>
</feature>
<feature type="turn" evidence="11">
    <location>
        <begin position="280"/>
        <end position="282"/>
    </location>
</feature>
<feature type="helix" evidence="11">
    <location>
        <begin position="284"/>
        <end position="287"/>
    </location>
</feature>
<feature type="helix" evidence="11">
    <location>
        <begin position="299"/>
        <end position="312"/>
    </location>
</feature>
<feature type="helix" evidence="11">
    <location>
        <begin position="317"/>
        <end position="333"/>
    </location>
</feature>
<feature type="strand" evidence="11">
    <location>
        <begin position="339"/>
        <end position="341"/>
    </location>
</feature>
<feature type="turn" evidence="11">
    <location>
        <begin position="342"/>
        <end position="344"/>
    </location>
</feature>
<feature type="strand" evidence="11">
    <location>
        <begin position="345"/>
        <end position="347"/>
    </location>
</feature>
<feature type="helix" evidence="11">
    <location>
        <begin position="353"/>
        <end position="362"/>
    </location>
</feature>
<feature type="helix" evidence="11">
    <location>
        <begin position="366"/>
        <end position="373"/>
    </location>
</feature>
<feature type="strand" evidence="11">
    <location>
        <begin position="374"/>
        <end position="379"/>
    </location>
</feature>
<feature type="strand" evidence="11">
    <location>
        <begin position="384"/>
        <end position="388"/>
    </location>
</feature>
<feature type="helix" evidence="11">
    <location>
        <begin position="391"/>
        <end position="420"/>
    </location>
</feature>
<feature type="strand" evidence="11">
    <location>
        <begin position="429"/>
        <end position="435"/>
    </location>
</feature>
<feature type="strand" evidence="11">
    <location>
        <begin position="443"/>
        <end position="445"/>
    </location>
</feature>
<feature type="helix" evidence="11">
    <location>
        <begin position="447"/>
        <end position="467"/>
    </location>
</feature>
<feature type="helix" evidence="11">
    <location>
        <begin position="469"/>
        <end position="477"/>
    </location>
</feature>
<feature type="helix" evidence="11">
    <location>
        <begin position="491"/>
        <end position="498"/>
    </location>
</feature>
<feature type="helix" evidence="11">
    <location>
        <begin position="503"/>
        <end position="512"/>
    </location>
</feature>
<feature type="helix" evidence="11">
    <location>
        <begin position="518"/>
        <end position="529"/>
    </location>
</feature>
<feature type="turn" evidence="11">
    <location>
        <begin position="530"/>
        <end position="532"/>
    </location>
</feature>
<feature type="strand" evidence="11">
    <location>
        <begin position="543"/>
        <end position="549"/>
    </location>
</feature>
<feature type="strand" evidence="11">
    <location>
        <begin position="554"/>
        <end position="558"/>
    </location>
</feature>
<feature type="helix" evidence="11">
    <location>
        <begin position="562"/>
        <end position="567"/>
    </location>
</feature>
<feature type="helix" evidence="11">
    <location>
        <begin position="572"/>
        <end position="579"/>
    </location>
</feature>
<feature type="helix" evidence="11">
    <location>
        <begin position="584"/>
        <end position="589"/>
    </location>
</feature>
<feature type="helix" evidence="11">
    <location>
        <begin position="624"/>
        <end position="640"/>
    </location>
</feature>
<feature type="strand" evidence="11">
    <location>
        <begin position="642"/>
        <end position="650"/>
    </location>
</feature>
<feature type="helix" evidence="11">
    <location>
        <begin position="663"/>
        <end position="672"/>
    </location>
</feature>
<feature type="helix" evidence="11">
    <location>
        <begin position="675"/>
        <end position="684"/>
    </location>
</feature>
<feature type="strand" evidence="12">
    <location>
        <begin position="688"/>
        <end position="691"/>
    </location>
</feature>
<feature type="helix" evidence="11">
    <location>
        <begin position="693"/>
        <end position="698"/>
    </location>
</feature>
<feature type="turn" evidence="11">
    <location>
        <begin position="706"/>
        <end position="708"/>
    </location>
</feature>
<feature type="helix" evidence="11">
    <location>
        <begin position="714"/>
        <end position="722"/>
    </location>
</feature>
<feature type="strand" evidence="11">
    <location>
        <begin position="728"/>
        <end position="733"/>
    </location>
</feature>
<feature type="strand" evidence="11">
    <location>
        <begin position="738"/>
        <end position="740"/>
    </location>
</feature>
<feature type="helix" evidence="11">
    <location>
        <begin position="744"/>
        <end position="751"/>
    </location>
</feature>
<feature type="helix" evidence="10">
    <location>
        <begin position="1371"/>
        <end position="1378"/>
    </location>
</feature>
<feature type="helix" evidence="10">
    <location>
        <begin position="1388"/>
        <end position="1391"/>
    </location>
</feature>
<feature type="helix" evidence="10">
    <location>
        <begin position="1395"/>
        <end position="1408"/>
    </location>
</feature>
<feature type="helix" evidence="10">
    <location>
        <begin position="1413"/>
        <end position="1433"/>
    </location>
</feature>
<feature type="helix" evidence="10">
    <location>
        <begin position="1438"/>
        <end position="1457"/>
    </location>
</feature>
<feature type="helix" evidence="10">
    <location>
        <begin position="1462"/>
        <end position="1464"/>
    </location>
</feature>
<feature type="turn" evidence="10">
    <location>
        <begin position="1470"/>
        <end position="1474"/>
    </location>
</feature>
<feature type="helix" evidence="10">
    <location>
        <begin position="1483"/>
        <end position="1516"/>
    </location>
</feature>
<feature type="helix" evidence="10">
    <location>
        <begin position="1548"/>
        <end position="1563"/>
    </location>
</feature>
<feature type="turn" evidence="10">
    <location>
        <begin position="1564"/>
        <end position="1566"/>
    </location>
</feature>
<feature type="helix" evidence="10">
    <location>
        <begin position="1569"/>
        <end position="1593"/>
    </location>
</feature>
<feature type="helix" evidence="10">
    <location>
        <begin position="1595"/>
        <end position="1597"/>
    </location>
</feature>
<feature type="helix" evidence="10">
    <location>
        <begin position="1600"/>
        <end position="1619"/>
    </location>
</feature>
<feature type="helix" evidence="10">
    <location>
        <begin position="1625"/>
        <end position="1642"/>
    </location>
</feature>
<feature type="helix" evidence="10">
    <location>
        <begin position="1650"/>
        <end position="1657"/>
    </location>
</feature>
<feature type="helix" evidence="10">
    <location>
        <begin position="1663"/>
        <end position="1672"/>
    </location>
</feature>
<feature type="strand" evidence="10">
    <location>
        <begin position="1677"/>
        <end position="1680"/>
    </location>
</feature>
<feature type="helix" evidence="10">
    <location>
        <begin position="1685"/>
        <end position="1694"/>
    </location>
</feature>
<feature type="helix" evidence="10">
    <location>
        <begin position="1695"/>
        <end position="1697"/>
    </location>
</feature>
<feature type="helix" evidence="10">
    <location>
        <begin position="1725"/>
        <end position="1727"/>
    </location>
</feature>
<feature type="helix" evidence="10">
    <location>
        <begin position="1732"/>
        <end position="1734"/>
    </location>
</feature>
<protein>
    <recommendedName>
        <fullName>Unconventional myosin-Vc</fullName>
    </recommendedName>
</protein>
<accession>Q9NQX4</accession>
<accession>Q6P1W8</accession>
<keyword id="KW-0002">3D-structure</keyword>
<keyword id="KW-0007">Acetylation</keyword>
<keyword id="KW-0009">Actin-binding</keyword>
<keyword id="KW-0025">Alternative splicing</keyword>
<keyword id="KW-0067">ATP-binding</keyword>
<keyword id="KW-0112">Calmodulin-binding</keyword>
<keyword id="KW-0175">Coiled coil</keyword>
<keyword id="KW-0903">Direct protein sequencing</keyword>
<keyword id="KW-0505">Motor protein</keyword>
<keyword id="KW-0518">Myosin</keyword>
<keyword id="KW-0547">Nucleotide-binding</keyword>
<keyword id="KW-1267">Proteomics identification</keyword>
<keyword id="KW-1185">Reference proteome</keyword>
<keyword id="KW-0677">Repeat</keyword>
<name>MYO5C_HUMAN</name>
<comment type="function">
    <text>May be involved in transferrin trafficking. Likely to power actin-based membrane trafficking in many physiologically crucial tissues.</text>
</comment>
<comment type="alternative products">
    <event type="alternative splicing"/>
    <isoform>
        <id>Q9NQX4-1</id>
        <name>1</name>
        <sequence type="displayed"/>
    </isoform>
    <isoform>
        <id>Q9NQX4-2</id>
        <name>2</name>
        <sequence type="described" ref="VSP_056592 VSP_056593"/>
    </isoform>
</comment>
<comment type="tissue specificity">
    <text evidence="6">Expressed chiefly in non-neuronal tissues. Particularly abundant in epithelial and glandular tissues including pancreas, prostate, mammary, stomach, colon and lung.</text>
</comment>
<comment type="similarity">
    <text evidence="9">Belongs to the TRAFAC class myosin-kinesin ATPase superfamily. Myosin family.</text>
</comment>
<organism>
    <name type="scientific">Homo sapiens</name>
    <name type="common">Human</name>
    <dbReference type="NCBI Taxonomy" id="9606"/>
    <lineage>
        <taxon>Eukaryota</taxon>
        <taxon>Metazoa</taxon>
        <taxon>Chordata</taxon>
        <taxon>Craniata</taxon>
        <taxon>Vertebrata</taxon>
        <taxon>Euteleostomi</taxon>
        <taxon>Mammalia</taxon>
        <taxon>Eutheria</taxon>
        <taxon>Euarchontoglires</taxon>
        <taxon>Primates</taxon>
        <taxon>Haplorrhini</taxon>
        <taxon>Catarrhini</taxon>
        <taxon>Hominidae</taxon>
        <taxon>Homo</taxon>
    </lineage>
</organism>
<sequence>MAVAELYTQYNRVWIPDPEEVWKSAEIAKDYRVGDKVLRLLLEDGTELDYSVNPESLPPLRNPDILVGENDLTALSYLHEPAVLHNLRIRFAESKLIYTYSGIILVAMNPYKQLPIYGDAIIHAYSGQNMGDMDPHIFAVAEEAYKQMARNNRNQSIIVSGESGAGKTVSARYAMRYFATVSKSGSNAHVEDKVLASNPITEAVGNAKTTRNDNSSRFGKYTEISFDEQNQIIGANMSTYLLEKSRVVFQSENERNYHIFYQLCASAQQSEFKHLKLGSAEEFNYTRMGGNTVIEGVNDRAEMVETQKTFTLLGFKEDFQMDVFKILAAILHLGNVQITAVGNERSSVSEDDSHLKVFCELLGLESGRVAQWLCNRKIVTSSETVVKPMTRPQAVNARDALAKKIYAHLFDFIVERINQALQFSGKQHTFIGVLDIYGFETFDVNSFEQFCINYANEKLQQQFNMHVFKLEQEEYMKEDIPWTLIDFYDNQPVIDLIEAKMGILELLDEECLLPHGTDENWLQKLYNNFVNRNPLFEKPRMSNTSFVIQHFADKVEYKCEGFLEKNRDTVYDMLVEILRASKFHLCANFFQENPTPPSPFGSMITVKSAKQVIKPNSKHFRTTVGSKFRSSLYLLMETLNATTPHYVRCIKPNDEKLPFEFDSKRIVQQLRACGVLETIRISAQSYPSRWTYIEFYSRYGILMTKQELSFSDKKEVCKVVLHRLIQDSNQYQFGKTKIFFRAGQVAYLEKLRLDKLRQSCVMVQKHMRGWLQRKKFLRERRAALIIQQYFRGQQTVRKAITAVALKEAWAAIIIQKHCRGYLVRSLYQLIRMATITMQAYSRGFLARRRYRKMLEEHKAVILQKYARAWLARRRFQSIRRFVLNIQLTYRVQRLQKKLEDQNKENHGLVEKLTSLAALRAGDVEKIQKLEAELEKAATHRRNYEEKGKRYRDAVEEKLAKLQKHNSELETQKEQIQLKLQEKTEELKEKMDNLTKQLFDDVQKEERQRMLLEKSFELKTQDYEKQIQSLKEEIKALKDEKMQLQHLVEGEHVTSDGLKAEVARLSKQVKTISEFEKEIELLQAQKIDVEKHVQSQKREMREKMSEITKQLLESYDIEDVRSRLSVEDLEHLNEDGELWFAYEGLKKATRVLESHFQSQKDCYEKEIEALNFKVVHLSQEINHLQKLFREENDINESIRHEVTRLTSENMMIPDFKQQISELEKQKQDLEIRLNEQAEKMKGKLEELSNQLHRSQEEEGTQRKALEAQNEIHTKEKEKLIDKIQEMQEASDHLKKQFETESEVKCNFRQEASRLTLENRDLEEELDMKDRVIKKLQDQVKTLSKTIGKANDVHSSSGPKEYLGMLQYKREDEAKLIQNLILDLKPRGVVVNMIPGLPAHILFMCVRYADSLNDANMLKSLMNSTINGIKQVVKEHLEDFEMLSFWLSNTCHFLNCLKQYSGEEEFMKHNSPQQNKNCLNNFDLSEYRQILSDVAIRIYHQFIIIMEKNIQPIIVPGMLEYESLQGISGLKPTGFRKRSSSIDDTDGYTMTSVLQQLSYFYTTMCQNGLDPELVRQAVKQLFFLIGAVTLNSLFLRKDMCSCRKGMQIRCNISYLEEWLKDKNLQNSLAKETLEPLSQAAWLLQVKKTTDSDAKEIYERCTSLSAVQIIKILNSYTPIDDFEKRVTPSFVRKVQALLNSREDSSQLMLDTKYLFQVTFPFTPSPHALEMIQIPSSFKLGFLNRL</sequence>
<reference key="1">
    <citation type="journal article" date="2002" name="J. Cell Sci.">
        <title>Human myosin-Vc is a novel class V myosin expressed in epithelial cells.</title>
        <authorList>
            <person name="Rodriguez O.C."/>
            <person name="Cheney R.E."/>
        </authorList>
    </citation>
    <scope>NUCLEOTIDE SEQUENCE [MRNA] (ISOFORM 1)</scope>
    <scope>VARIANT PRO-522</scope>
    <scope>TISSUE SPECIFICITY</scope>
</reference>
<reference key="2">
    <citation type="journal article" date="2006" name="Nature">
        <title>Analysis of the DNA sequence and duplication history of human chromosome 15.</title>
        <authorList>
            <person name="Zody M.C."/>
            <person name="Garber M."/>
            <person name="Sharpe T."/>
            <person name="Young S.K."/>
            <person name="Rowen L."/>
            <person name="O'Neill K."/>
            <person name="Whittaker C.A."/>
            <person name="Kamal M."/>
            <person name="Chang J.L."/>
            <person name="Cuomo C.A."/>
            <person name="Dewar K."/>
            <person name="FitzGerald M.G."/>
            <person name="Kodira C.D."/>
            <person name="Madan A."/>
            <person name="Qin S."/>
            <person name="Yang X."/>
            <person name="Abbasi N."/>
            <person name="Abouelleil A."/>
            <person name="Arachchi H.M."/>
            <person name="Baradarani L."/>
            <person name="Birditt B."/>
            <person name="Bloom S."/>
            <person name="Bloom T."/>
            <person name="Borowsky M.L."/>
            <person name="Burke J."/>
            <person name="Butler J."/>
            <person name="Cook A."/>
            <person name="DeArellano K."/>
            <person name="DeCaprio D."/>
            <person name="Dorris L. III"/>
            <person name="Dors M."/>
            <person name="Eichler E.E."/>
            <person name="Engels R."/>
            <person name="Fahey J."/>
            <person name="Fleetwood P."/>
            <person name="Friedman C."/>
            <person name="Gearin G."/>
            <person name="Hall J.L."/>
            <person name="Hensley G."/>
            <person name="Johnson E."/>
            <person name="Jones C."/>
            <person name="Kamat A."/>
            <person name="Kaur A."/>
            <person name="Locke D.P."/>
            <person name="Madan A."/>
            <person name="Munson G."/>
            <person name="Jaffe D.B."/>
            <person name="Lui A."/>
            <person name="Macdonald P."/>
            <person name="Mauceli E."/>
            <person name="Naylor J.W."/>
            <person name="Nesbitt R."/>
            <person name="Nicol R."/>
            <person name="O'Leary S.B."/>
            <person name="Ratcliffe A."/>
            <person name="Rounsley S."/>
            <person name="She X."/>
            <person name="Sneddon K.M.B."/>
            <person name="Stewart S."/>
            <person name="Sougnez C."/>
            <person name="Stone S.M."/>
            <person name="Topham K."/>
            <person name="Vincent D."/>
            <person name="Wang S."/>
            <person name="Zimmer A.R."/>
            <person name="Birren B.W."/>
            <person name="Hood L."/>
            <person name="Lander E.S."/>
            <person name="Nusbaum C."/>
        </authorList>
    </citation>
    <scope>NUCLEOTIDE SEQUENCE [LARGE SCALE GENOMIC DNA]</scope>
</reference>
<reference key="3">
    <citation type="journal article" date="2004" name="Genome Res.">
        <title>The status, quality, and expansion of the NIH full-length cDNA project: the Mammalian Gene Collection (MGC).</title>
        <authorList>
            <consortium name="The MGC Project Team"/>
        </authorList>
    </citation>
    <scope>NUCLEOTIDE SEQUENCE [LARGE SCALE MRNA] (ISOFORM 2)</scope>
    <source>
        <tissue>PNS</tissue>
    </source>
</reference>
<reference key="4">
    <citation type="submission" date="2008-02" db="UniProtKB">
        <authorList>
            <person name="Bienvenut W.V."/>
            <person name="Dhillon A.S."/>
            <person name="Kolch W."/>
        </authorList>
    </citation>
    <scope>PROTEIN SEQUENCE OF 2-12</scope>
    <scope>CLEAVAGE OF INITIATOR METHIONINE</scope>
    <scope>ACETYLATION AT ALA-2</scope>
    <scope>IDENTIFICATION BY MASS SPECTROMETRY</scope>
    <source>
        <tissue>Hepatoma</tissue>
    </source>
</reference>
<dbReference type="EMBL" id="AF272390">
    <property type="protein sequence ID" value="AAF78783.1"/>
    <property type="molecule type" value="mRNA"/>
</dbReference>
<dbReference type="EMBL" id="AC010674">
    <property type="status" value="NOT_ANNOTATED_CDS"/>
    <property type="molecule type" value="Genomic_DNA"/>
</dbReference>
<dbReference type="EMBL" id="BC064841">
    <property type="protein sequence ID" value="AAH64841.1"/>
    <property type="molecule type" value="mRNA"/>
</dbReference>
<dbReference type="CCDS" id="CCDS42036.1">
    <molecule id="Q9NQX4-1"/>
</dbReference>
<dbReference type="RefSeq" id="NP_061198.2">
    <molecule id="Q9NQX4-1"/>
    <property type="nucleotide sequence ID" value="NM_018728.4"/>
</dbReference>
<dbReference type="PDB" id="4L8T">
    <property type="method" value="X-ray"/>
    <property type="resolution" value="2.95 A"/>
    <property type="chains" value="A=1319-1742"/>
</dbReference>
<dbReference type="PDB" id="4ZG4">
    <property type="method" value="X-ray"/>
    <property type="resolution" value="2.36 A"/>
    <property type="chains" value="B/E=1-755"/>
</dbReference>
<dbReference type="PDB" id="5HMP">
    <property type="method" value="X-ray"/>
    <property type="resolution" value="2.40 A"/>
    <property type="chains" value="A/B=5-754"/>
</dbReference>
<dbReference type="PDBsum" id="4L8T"/>
<dbReference type="PDBsum" id="4ZG4"/>
<dbReference type="PDBsum" id="5HMP"/>
<dbReference type="SMR" id="Q9NQX4"/>
<dbReference type="BioGRID" id="121005">
    <property type="interactions" value="192"/>
</dbReference>
<dbReference type="FunCoup" id="Q9NQX4">
    <property type="interactions" value="1427"/>
</dbReference>
<dbReference type="IntAct" id="Q9NQX4">
    <property type="interactions" value="145"/>
</dbReference>
<dbReference type="STRING" id="9606.ENSP00000261839"/>
<dbReference type="iPTMnet" id="Q9NQX4"/>
<dbReference type="PhosphoSitePlus" id="Q9NQX4"/>
<dbReference type="SwissPalm" id="Q9NQX4"/>
<dbReference type="BioMuta" id="MYO5C"/>
<dbReference type="DMDM" id="294862453"/>
<dbReference type="jPOST" id="Q9NQX4"/>
<dbReference type="MassIVE" id="Q9NQX4"/>
<dbReference type="PaxDb" id="9606-ENSP00000261839"/>
<dbReference type="PeptideAtlas" id="Q9NQX4"/>
<dbReference type="ProteomicsDB" id="66876"/>
<dbReference type="ProteomicsDB" id="82223">
    <molecule id="Q9NQX4-1"/>
</dbReference>
<dbReference type="Pumba" id="Q9NQX4"/>
<dbReference type="Antibodypedia" id="24945">
    <property type="antibodies" value="57 antibodies from 15 providers"/>
</dbReference>
<dbReference type="DNASU" id="55930"/>
<dbReference type="Ensembl" id="ENST00000261839.12">
    <molecule id="Q9NQX4-1"/>
    <property type="protein sequence ID" value="ENSP00000261839.7"/>
    <property type="gene ID" value="ENSG00000128833.13"/>
</dbReference>
<dbReference type="Ensembl" id="ENST00000559459.5">
    <molecule id="Q9NQX4-2"/>
    <property type="protein sequence ID" value="ENSP00000454064.1"/>
    <property type="gene ID" value="ENSG00000128833.13"/>
</dbReference>
<dbReference type="GeneID" id="55930"/>
<dbReference type="KEGG" id="hsa:55930"/>
<dbReference type="MANE-Select" id="ENST00000261839.12">
    <property type="protein sequence ID" value="ENSP00000261839.7"/>
    <property type="RefSeq nucleotide sequence ID" value="NM_018728.4"/>
    <property type="RefSeq protein sequence ID" value="NP_061198.2"/>
</dbReference>
<dbReference type="UCSC" id="uc010bff.4">
    <molecule id="Q9NQX4-1"/>
    <property type="organism name" value="human"/>
</dbReference>
<dbReference type="AGR" id="HGNC:7604"/>
<dbReference type="CTD" id="55930"/>
<dbReference type="DisGeNET" id="55930"/>
<dbReference type="GeneCards" id="MYO5C"/>
<dbReference type="HGNC" id="HGNC:7604">
    <property type="gene designation" value="MYO5C"/>
</dbReference>
<dbReference type="HPA" id="ENSG00000128833">
    <property type="expression patterns" value="Low tissue specificity"/>
</dbReference>
<dbReference type="MIM" id="610022">
    <property type="type" value="gene"/>
</dbReference>
<dbReference type="neXtProt" id="NX_Q9NQX4"/>
<dbReference type="OpenTargets" id="ENSG00000128833"/>
<dbReference type="PharmGKB" id="PA31409"/>
<dbReference type="VEuPathDB" id="HostDB:ENSG00000128833"/>
<dbReference type="eggNOG" id="KOG0160">
    <property type="taxonomic scope" value="Eukaryota"/>
</dbReference>
<dbReference type="GeneTree" id="ENSGT00940000157971"/>
<dbReference type="HOGENOM" id="CLU_000192_9_4_1"/>
<dbReference type="InParanoid" id="Q9NQX4"/>
<dbReference type="OMA" id="EIMFDDR"/>
<dbReference type="OrthoDB" id="6108017at2759"/>
<dbReference type="PAN-GO" id="Q9NQX4">
    <property type="GO annotations" value="7 GO annotations based on evolutionary models"/>
</dbReference>
<dbReference type="PhylomeDB" id="Q9NQX4"/>
<dbReference type="TreeFam" id="TF328771"/>
<dbReference type="PathwayCommons" id="Q9NQX4"/>
<dbReference type="SignaLink" id="Q9NQX4"/>
<dbReference type="BioGRID-ORCS" id="55930">
    <property type="hits" value="12 hits in 1149 CRISPR screens"/>
</dbReference>
<dbReference type="ChiTaRS" id="MYO5C">
    <property type="organism name" value="human"/>
</dbReference>
<dbReference type="EvolutionaryTrace" id="Q9NQX4"/>
<dbReference type="GenomeRNAi" id="55930"/>
<dbReference type="Pharos" id="Q9NQX4">
    <property type="development level" value="Tbio"/>
</dbReference>
<dbReference type="PRO" id="PR:Q9NQX4"/>
<dbReference type="Proteomes" id="UP000005640">
    <property type="component" value="Chromosome 15"/>
</dbReference>
<dbReference type="RNAct" id="Q9NQX4">
    <property type="molecule type" value="protein"/>
</dbReference>
<dbReference type="Bgee" id="ENSG00000128833">
    <property type="expression patterns" value="Expressed in bronchial epithelial cell and 188 other cell types or tissues"/>
</dbReference>
<dbReference type="ExpressionAtlas" id="Q9NQX4">
    <property type="expression patterns" value="baseline and differential"/>
</dbReference>
<dbReference type="GO" id="GO:0015629">
    <property type="term" value="C:actin cytoskeleton"/>
    <property type="evidence" value="ECO:0000318"/>
    <property type="project" value="GO_Central"/>
</dbReference>
<dbReference type="GO" id="GO:0005737">
    <property type="term" value="C:cytoplasm"/>
    <property type="evidence" value="ECO:0000318"/>
    <property type="project" value="GO_Central"/>
</dbReference>
<dbReference type="GO" id="GO:0070062">
    <property type="term" value="C:extracellular exosome"/>
    <property type="evidence" value="ECO:0007005"/>
    <property type="project" value="UniProtKB"/>
</dbReference>
<dbReference type="GO" id="GO:0016020">
    <property type="term" value="C:membrane"/>
    <property type="evidence" value="ECO:0000318"/>
    <property type="project" value="GO_Central"/>
</dbReference>
<dbReference type="GO" id="GO:0016459">
    <property type="term" value="C:myosin complex"/>
    <property type="evidence" value="ECO:0007669"/>
    <property type="project" value="UniProtKB-KW"/>
</dbReference>
<dbReference type="GO" id="GO:0051015">
    <property type="term" value="F:actin filament binding"/>
    <property type="evidence" value="ECO:0000318"/>
    <property type="project" value="GO_Central"/>
</dbReference>
<dbReference type="GO" id="GO:0005524">
    <property type="term" value="F:ATP binding"/>
    <property type="evidence" value="ECO:0007669"/>
    <property type="project" value="UniProtKB-KW"/>
</dbReference>
<dbReference type="GO" id="GO:0005516">
    <property type="term" value="F:calmodulin binding"/>
    <property type="evidence" value="ECO:0007669"/>
    <property type="project" value="UniProtKB-KW"/>
</dbReference>
<dbReference type="GO" id="GO:0000146">
    <property type="term" value="F:microfilament motor activity"/>
    <property type="evidence" value="ECO:0000318"/>
    <property type="project" value="GO_Central"/>
</dbReference>
<dbReference type="GO" id="GO:0007015">
    <property type="term" value="P:actin filament organization"/>
    <property type="evidence" value="ECO:0000318"/>
    <property type="project" value="GO_Central"/>
</dbReference>
<dbReference type="CDD" id="cd15476">
    <property type="entry name" value="Myo5c_CBD"/>
    <property type="match status" value="1"/>
</dbReference>
<dbReference type="CDD" id="cd01380">
    <property type="entry name" value="MYSc_Myo5"/>
    <property type="match status" value="1"/>
</dbReference>
<dbReference type="FunFam" id="1.20.58.530:FF:000002">
    <property type="entry name" value="Class V myosin"/>
    <property type="match status" value="1"/>
</dbReference>
<dbReference type="FunFam" id="1.10.10.820:FF:000001">
    <property type="entry name" value="Myosin heavy chain"/>
    <property type="match status" value="1"/>
</dbReference>
<dbReference type="FunFam" id="1.20.120.720:FF:000016">
    <property type="entry name" value="Myosin VB"/>
    <property type="match status" value="1"/>
</dbReference>
<dbReference type="FunFam" id="3.40.850.10:FF:000089">
    <property type="entry name" value="Myosin VC"/>
    <property type="match status" value="1"/>
</dbReference>
<dbReference type="FunFam" id="1.20.5.190:FF:000001">
    <property type="entry name" value="unconventional myosin-Va"/>
    <property type="match status" value="1"/>
</dbReference>
<dbReference type="FunFam" id="3.30.70.1590:FF:000005">
    <property type="entry name" value="unconventional myosin-Vc"/>
    <property type="match status" value="1"/>
</dbReference>
<dbReference type="Gene3D" id="1.10.10.820">
    <property type="match status" value="1"/>
</dbReference>
<dbReference type="Gene3D" id="1.20.5.190">
    <property type="match status" value="2"/>
</dbReference>
<dbReference type="Gene3D" id="1.20.58.530">
    <property type="match status" value="1"/>
</dbReference>
<dbReference type="Gene3D" id="3.30.70.1590">
    <property type="match status" value="1"/>
</dbReference>
<dbReference type="Gene3D" id="6.10.220.10">
    <property type="match status" value="1"/>
</dbReference>
<dbReference type="Gene3D" id="3.40.850.10">
    <property type="entry name" value="Kinesin motor domain"/>
    <property type="match status" value="1"/>
</dbReference>
<dbReference type="Gene3D" id="1.20.120.720">
    <property type="entry name" value="Myosin VI head, motor domain, U50 subdomain"/>
    <property type="match status" value="1"/>
</dbReference>
<dbReference type="InterPro" id="IPR002710">
    <property type="entry name" value="Dilute_dom"/>
</dbReference>
<dbReference type="InterPro" id="IPR000048">
    <property type="entry name" value="IQ_motif_EF-hand-BS"/>
</dbReference>
<dbReference type="InterPro" id="IPR036961">
    <property type="entry name" value="Kinesin_motor_dom_sf"/>
</dbReference>
<dbReference type="InterPro" id="IPR037991">
    <property type="entry name" value="Myo5c_CBD"/>
</dbReference>
<dbReference type="InterPro" id="IPR001609">
    <property type="entry name" value="Myosin_head_motor_dom-like"/>
</dbReference>
<dbReference type="InterPro" id="IPR004009">
    <property type="entry name" value="Myosin_N"/>
</dbReference>
<dbReference type="InterPro" id="IPR036103">
    <property type="entry name" value="MYSc_Myo5"/>
</dbReference>
<dbReference type="InterPro" id="IPR027417">
    <property type="entry name" value="P-loop_NTPase"/>
</dbReference>
<dbReference type="PANTHER" id="PTHR13140">
    <property type="entry name" value="MYOSIN"/>
    <property type="match status" value="1"/>
</dbReference>
<dbReference type="PANTHER" id="PTHR13140:SF313">
    <property type="entry name" value="UNCONVENTIONAL MYOSIN-VC"/>
    <property type="match status" value="1"/>
</dbReference>
<dbReference type="Pfam" id="PF01843">
    <property type="entry name" value="DIL"/>
    <property type="match status" value="1"/>
</dbReference>
<dbReference type="Pfam" id="PF00612">
    <property type="entry name" value="IQ"/>
    <property type="match status" value="4"/>
</dbReference>
<dbReference type="Pfam" id="PF00063">
    <property type="entry name" value="Myosin_head"/>
    <property type="match status" value="1"/>
</dbReference>
<dbReference type="PRINTS" id="PR00193">
    <property type="entry name" value="MYOSINHEAVY"/>
</dbReference>
<dbReference type="SMART" id="SM01132">
    <property type="entry name" value="DIL"/>
    <property type="match status" value="1"/>
</dbReference>
<dbReference type="SMART" id="SM00015">
    <property type="entry name" value="IQ"/>
    <property type="match status" value="5"/>
</dbReference>
<dbReference type="SMART" id="SM00242">
    <property type="entry name" value="MYSc"/>
    <property type="match status" value="1"/>
</dbReference>
<dbReference type="SUPFAM" id="SSF52540">
    <property type="entry name" value="P-loop containing nucleoside triphosphate hydrolases"/>
    <property type="match status" value="2"/>
</dbReference>
<dbReference type="PROSITE" id="PS51126">
    <property type="entry name" value="DILUTE"/>
    <property type="match status" value="1"/>
</dbReference>
<dbReference type="PROSITE" id="PS50096">
    <property type="entry name" value="IQ"/>
    <property type="match status" value="4"/>
</dbReference>
<dbReference type="PROSITE" id="PS51456">
    <property type="entry name" value="MYOSIN_MOTOR"/>
    <property type="match status" value="1"/>
</dbReference>
<dbReference type="PROSITE" id="PS51844">
    <property type="entry name" value="SH3_LIKE"/>
    <property type="match status" value="1"/>
</dbReference>
<gene>
    <name type="primary">MYO5C</name>
</gene>
<proteinExistence type="evidence at protein level"/>